<dbReference type="EC" id="2.5.1.83"/>
<dbReference type="EMBL" id="AB003188">
    <property type="protein sequence ID" value="BAA25266.1"/>
    <property type="molecule type" value="Genomic_DNA"/>
</dbReference>
<dbReference type="PDB" id="3AQB">
    <property type="method" value="X-ray"/>
    <property type="resolution" value="2.40 A"/>
    <property type="chains" value="A/C=1-143"/>
</dbReference>
<dbReference type="PDB" id="3AQC">
    <property type="method" value="X-ray"/>
    <property type="resolution" value="2.61 A"/>
    <property type="chains" value="A/C=1-143"/>
</dbReference>
<dbReference type="PDBsum" id="3AQB"/>
<dbReference type="PDBsum" id="3AQC"/>
<dbReference type="SMR" id="O66127"/>
<dbReference type="KEGG" id="ag:BAA25266"/>
<dbReference type="BioCyc" id="MetaCyc:MONOMER-13828"/>
<dbReference type="BRENDA" id="2.5.1.83">
    <property type="organism ID" value="3348"/>
</dbReference>
<dbReference type="EvolutionaryTrace" id="O66127"/>
<dbReference type="GO" id="GO:0036423">
    <property type="term" value="F:hexaprenyl-diphosphate synthase ((2E,6E)-farnesyl-diphosphate specific) activity"/>
    <property type="evidence" value="ECO:0007669"/>
    <property type="project" value="UniProtKB-EC"/>
</dbReference>
<dbReference type="GO" id="GO:0000287">
    <property type="term" value="F:magnesium ion binding"/>
    <property type="evidence" value="ECO:0000314"/>
    <property type="project" value="UniProtKB"/>
</dbReference>
<dbReference type="GO" id="GO:0016765">
    <property type="term" value="F:transferase activity, transferring alkyl or aryl (other than methyl) groups"/>
    <property type="evidence" value="ECO:0000314"/>
    <property type="project" value="UniProtKB"/>
</dbReference>
<dbReference type="GO" id="GO:0009234">
    <property type="term" value="P:menaquinone biosynthetic process"/>
    <property type="evidence" value="ECO:0007669"/>
    <property type="project" value="UniProtKB-KW"/>
</dbReference>
<dbReference type="Gene3D" id="1.20.120.1450">
    <property type="match status" value="1"/>
</dbReference>
<dbReference type="InterPro" id="IPR054999">
    <property type="entry name" value="HexA"/>
</dbReference>
<dbReference type="NCBIfam" id="NF045627">
    <property type="entry name" value="HxpDPsynsmall"/>
    <property type="match status" value="1"/>
</dbReference>
<dbReference type="Pfam" id="PF22538">
    <property type="entry name" value="HexPS-like"/>
    <property type="match status" value="1"/>
</dbReference>
<gene>
    <name type="primary">hexs-a</name>
</gene>
<organism>
    <name type="scientific">Micrococcus luteus</name>
    <name type="common">Micrococcus lysodeikticus</name>
    <dbReference type="NCBI Taxonomy" id="1270"/>
    <lineage>
        <taxon>Bacteria</taxon>
        <taxon>Bacillati</taxon>
        <taxon>Actinomycetota</taxon>
        <taxon>Actinomycetes</taxon>
        <taxon>Micrococcales</taxon>
        <taxon>Micrococcaceae</taxon>
        <taxon>Micrococcus</taxon>
    </lineage>
</organism>
<accession>O66127</accession>
<sequence>MRYLHKIELELNRLTSRYPFFKKIAFDAEIIKLVDDLNVDENVKCAIVAIDTSMRMQDFINEDNKDSFVLSTDVLSALFYKYLSQPFYQHDFLVLTDCVSRINELKSIRATITDEIALHNINKQIHYMFIQPYMNNEKVVSYE</sequence>
<comment type="function">
    <text evidence="1 3 4">Catalyzes the condensation of three molecules of isopentenyl diphosphate with farnesyl diphosphate (FPP) to yield (all-E)-hexaprenyl diphosphate (HexPP; C30), the precursor of the prenyl side chain of menaquinone-6. Large subunit Hexs-B catalyzes the condensation reaction and the final product chain length is cooperatively regulated by both the Hexs-A and Hexs-B subunits using the whole size of the hydrophobic cleft as a ruler.</text>
</comment>
<comment type="catalytic activity">
    <reaction evidence="4">
        <text>3 isopentenyl diphosphate + (2E,6E)-farnesyl diphosphate = all-trans-hexaprenyl diphosphate + 3 diphosphate</text>
        <dbReference type="Rhea" id="RHEA:27559"/>
        <dbReference type="ChEBI" id="CHEBI:33019"/>
        <dbReference type="ChEBI" id="CHEBI:58179"/>
        <dbReference type="ChEBI" id="CHEBI:128769"/>
        <dbReference type="ChEBI" id="CHEBI:175763"/>
        <dbReference type="EC" id="2.5.1.83"/>
    </reaction>
</comment>
<comment type="subunit">
    <text evidence="2">Dimer of heterodimer or heterotetramer composed of a small (Hexs-a) and large (Hexs-B) subunit.</text>
</comment>
<protein>
    <recommendedName>
        <fullName>Hexaprenyl-diphosphate synthase small subunit ((2E,6E)-farnesyl-diphosphate specific)</fullName>
        <shortName>HexPS</shortName>
        <ecNumber>2.5.1.83</ecNumber>
    </recommendedName>
    <alternativeName>
        <fullName>Hexaprenyl diphosphate synthase</fullName>
    </alternativeName>
    <alternativeName>
        <fullName>Hexaprenyl pyrophosphate synthetase</fullName>
    </alternativeName>
</protein>
<reference key="1">
    <citation type="journal article" date="1998" name="J. Bacteriol.">
        <title>Molecular cloning, expression, and characterization of the genes encoding the two essential protein components of Micrococcus luteus B-P 26 hexaprenyl diphosphate synthase.</title>
        <authorList>
            <person name="Shimizu N."/>
            <person name="Koyama T."/>
            <person name="Ogura K."/>
        </authorList>
    </citation>
    <scope>NUCLEOTIDE SEQUENCE [GENOMIC DNA]</scope>
    <scope>FUNCTION AS A HEXAPRENYL-DIPHOSPHATE SYNTHASE</scope>
    <scope>CATALYTIC ACTIVITY</scope>
    <scope>NOMENCLATURE</scope>
    <source>
        <strain>B-P 26</strain>
    </source>
</reference>
<reference key="2">
    <citation type="journal article" date="1982" name="J. Biol. Chem.">
        <title>Hexaprenyl pyrophosphate synthetase from Micrococcus luteus B-P 26. Separation of two essential components.</title>
        <authorList>
            <person name="Fujii H."/>
            <person name="Koyama T."/>
            <person name="Ogura K."/>
        </authorList>
    </citation>
    <scope>FUNCTION AS A HEXAPRENYL-DIPHOSPHATE SYNTHASE</scope>
</reference>
<reference key="3">
    <citation type="journal article" date="2001" name="Bioorg. Med. Chem. Lett.">
        <title>Artificial substrates of medium-chain elongating enzymes, hexaprenyl- and heptaprenyl diphosphate synthases.</title>
        <authorList>
            <person name="Nagaki M."/>
            <person name="Kimura K."/>
            <person name="Kimura H."/>
            <person name="Maki Y."/>
            <person name="Goto E."/>
            <person name="Nishino T."/>
            <person name="Koyama T."/>
        </authorList>
    </citation>
    <scope>FUNCTION AS A HEXAPRENYL-DIPHOSPHATE SYNTHASE</scope>
    <source>
        <strain>B-P 26</strain>
    </source>
</reference>
<reference key="4">
    <citation type="journal article" date="2011" name="J. Biol. Chem.">
        <title>Crystal structure of heterodimeric hexaprenyl diphosphate synthase from Micrococcus luteus B-P 26 reveals that the small subunit is directly involved in the product chain length regulation.</title>
        <authorList>
            <person name="Sasaki D."/>
            <person name="Fujihashi M."/>
            <person name="Okuyama N."/>
            <person name="Kobayashi Y."/>
            <person name="Noike M."/>
            <person name="Koyama T."/>
            <person name="Miki K."/>
        </authorList>
    </citation>
    <scope>X-RAY CRYSTALLOGRAPHY (2.40 ANGSTROMS) IN COMPLEX WITH SUBSTRATE ANALOGS AND MAGNESIUM IONS</scope>
    <scope>REACTION MECHANISM</scope>
    <scope>SUBUNIT</scope>
    <source>
        <strain>B-P 26</strain>
    </source>
</reference>
<keyword id="KW-0002">3D-structure</keyword>
<keyword id="KW-0474">Menaquinone biosynthesis</keyword>
<keyword id="KW-0808">Transferase</keyword>
<evidence type="ECO:0000269" key="1">
    <source>
    </source>
</evidence>
<evidence type="ECO:0000269" key="2">
    <source>
    </source>
</evidence>
<evidence type="ECO:0000269" key="3">
    <source>
    </source>
</evidence>
<evidence type="ECO:0000269" key="4">
    <source>
    </source>
</evidence>
<evidence type="ECO:0007829" key="5">
    <source>
        <dbReference type="PDB" id="3AQB"/>
    </source>
</evidence>
<name>HEXA_MICLU</name>
<proteinExistence type="evidence at protein level"/>
<feature type="chain" id="PRO_0000419165" description="Hexaprenyl-diphosphate synthase small subunit ((2E,6E)-farnesyl-diphosphate specific)">
    <location>
        <begin position="1"/>
        <end position="143"/>
    </location>
</feature>
<feature type="helix" evidence="5">
    <location>
        <begin position="2"/>
        <end position="17"/>
    </location>
</feature>
<feature type="helix" evidence="5">
    <location>
        <begin position="28"/>
        <end position="35"/>
    </location>
</feature>
<feature type="helix" evidence="5">
    <location>
        <begin position="41"/>
        <end position="56"/>
    </location>
</feature>
<feature type="helix" evidence="5">
    <location>
        <begin position="57"/>
        <end position="59"/>
    </location>
</feature>
<feature type="turn" evidence="5">
    <location>
        <begin position="62"/>
        <end position="64"/>
    </location>
</feature>
<feature type="helix" evidence="5">
    <location>
        <begin position="65"/>
        <end position="82"/>
    </location>
</feature>
<feature type="turn" evidence="5">
    <location>
        <begin position="83"/>
        <end position="87"/>
    </location>
</feature>
<feature type="helix" evidence="5">
    <location>
        <begin position="89"/>
        <end position="110"/>
    </location>
</feature>
<feature type="helix" evidence="5">
    <location>
        <begin position="115"/>
        <end position="126"/>
    </location>
</feature>
<feature type="turn" evidence="5">
    <location>
        <begin position="127"/>
        <end position="130"/>
    </location>
</feature>
<feature type="helix" evidence="5">
    <location>
        <begin position="131"/>
        <end position="133"/>
    </location>
</feature>